<protein>
    <recommendedName>
        <fullName evidence="2">Transcription factor 21</fullName>
        <shortName>TCF-21</shortName>
    </recommendedName>
    <alternativeName>
        <fullName evidence="2">Capsulin</fullName>
    </alternativeName>
    <alternativeName>
        <fullName evidence="2">Epicardin</fullName>
    </alternativeName>
    <alternativeName>
        <fullName evidence="2">Podocyte-expressed 1</fullName>
        <shortName evidence="2">Pod 1</shortName>
        <shortName evidence="2">Pod-1</shortName>
    </alternativeName>
</protein>
<gene>
    <name type="primary">tcf21</name>
    <name evidence="2" type="synonym">pod1</name>
</gene>
<dbReference type="EMBL" id="BC153711">
    <property type="protein sequence ID" value="AAI53712.1"/>
    <property type="molecule type" value="mRNA"/>
</dbReference>
<dbReference type="RefSeq" id="NP_001103518.1">
    <property type="nucleotide sequence ID" value="NM_001110048.1"/>
</dbReference>
<dbReference type="SMR" id="A8E5T6"/>
<dbReference type="FunCoup" id="A8E5T6">
    <property type="interactions" value="486"/>
</dbReference>
<dbReference type="STRING" id="8364.ENSXETP00000014442"/>
<dbReference type="PaxDb" id="8364-ENSXETP00000000219"/>
<dbReference type="DNASU" id="100126209"/>
<dbReference type="GeneID" id="100126209"/>
<dbReference type="KEGG" id="xtr:100126209"/>
<dbReference type="AGR" id="Xenbase:XB-GENE-484805"/>
<dbReference type="CTD" id="6943"/>
<dbReference type="Xenbase" id="XB-GENE-484805">
    <property type="gene designation" value="tcf21"/>
</dbReference>
<dbReference type="eggNOG" id="KOG4029">
    <property type="taxonomic scope" value="Eukaryota"/>
</dbReference>
<dbReference type="HOGENOM" id="CLU_092663_0_0_1"/>
<dbReference type="InParanoid" id="A8E5T6"/>
<dbReference type="OMA" id="CEGACAN"/>
<dbReference type="OrthoDB" id="6233288at2759"/>
<dbReference type="PhylomeDB" id="A8E5T6"/>
<dbReference type="TreeFam" id="TF350742"/>
<dbReference type="Proteomes" id="UP000008143">
    <property type="component" value="Chromosome 5"/>
</dbReference>
<dbReference type="Bgee" id="ENSXETG00000000114">
    <property type="expression patterns" value="Expressed in mesonephros and 8 other cell types or tissues"/>
</dbReference>
<dbReference type="GO" id="GO:0005634">
    <property type="term" value="C:nucleus"/>
    <property type="evidence" value="ECO:0000250"/>
    <property type="project" value="UniProtKB"/>
</dbReference>
<dbReference type="GO" id="GO:0001228">
    <property type="term" value="F:DNA-binding transcription activator activity, RNA polymerase II-specific"/>
    <property type="evidence" value="ECO:0000250"/>
    <property type="project" value="UniProtKB"/>
</dbReference>
<dbReference type="GO" id="GO:0001227">
    <property type="term" value="F:DNA-binding transcription repressor activity, RNA polymerase II-specific"/>
    <property type="evidence" value="ECO:0000250"/>
    <property type="project" value="UniProtKB"/>
</dbReference>
<dbReference type="GO" id="GO:0070888">
    <property type="term" value="F:E-box binding"/>
    <property type="evidence" value="ECO:0000250"/>
    <property type="project" value="UniProtKB"/>
</dbReference>
<dbReference type="GO" id="GO:0046983">
    <property type="term" value="F:protein dimerization activity"/>
    <property type="evidence" value="ECO:0000250"/>
    <property type="project" value="UniProtKB"/>
</dbReference>
<dbReference type="GO" id="GO:0001658">
    <property type="term" value="P:branching involved in ureteric bud morphogenesis"/>
    <property type="evidence" value="ECO:0000250"/>
    <property type="project" value="UniProtKB"/>
</dbReference>
<dbReference type="GO" id="GO:0014707">
    <property type="term" value="P:branchiomeric skeletal muscle development"/>
    <property type="evidence" value="ECO:0000250"/>
    <property type="project" value="UniProtKB"/>
</dbReference>
<dbReference type="GO" id="GO:0060435">
    <property type="term" value="P:bronchiole development"/>
    <property type="evidence" value="ECO:0000250"/>
    <property type="project" value="UniProtKB"/>
</dbReference>
<dbReference type="GO" id="GO:0060539">
    <property type="term" value="P:diaphragm development"/>
    <property type="evidence" value="ECO:0000250"/>
    <property type="project" value="UniProtKB"/>
</dbReference>
<dbReference type="GO" id="GO:0048557">
    <property type="term" value="P:embryonic digestive tract morphogenesis"/>
    <property type="evidence" value="ECO:0000250"/>
    <property type="project" value="UniProtKB"/>
</dbReference>
<dbReference type="GO" id="GO:0030855">
    <property type="term" value="P:epithelial cell differentiation"/>
    <property type="evidence" value="ECO:0000250"/>
    <property type="project" value="UniProtKB"/>
</dbReference>
<dbReference type="GO" id="GO:0048732">
    <property type="term" value="P:gland development"/>
    <property type="evidence" value="ECO:0000250"/>
    <property type="project" value="UniProtKB"/>
</dbReference>
<dbReference type="GO" id="GO:0032835">
    <property type="term" value="P:glomerulus development"/>
    <property type="evidence" value="ECO:0000250"/>
    <property type="project" value="UniProtKB"/>
</dbReference>
<dbReference type="GO" id="GO:0001822">
    <property type="term" value="P:kidney development"/>
    <property type="evidence" value="ECO:0000250"/>
    <property type="project" value="UniProtKB"/>
</dbReference>
<dbReference type="GO" id="GO:0048286">
    <property type="term" value="P:lung alveolus development"/>
    <property type="evidence" value="ECO:0000250"/>
    <property type="project" value="UniProtKB"/>
</dbReference>
<dbReference type="GO" id="GO:0060425">
    <property type="term" value="P:lung morphogenesis"/>
    <property type="evidence" value="ECO:0000250"/>
    <property type="project" value="UniProtKB"/>
</dbReference>
<dbReference type="GO" id="GO:0060426">
    <property type="term" value="P:lung vasculature development"/>
    <property type="evidence" value="ECO:0000250"/>
    <property type="project" value="UniProtKB"/>
</dbReference>
<dbReference type="GO" id="GO:0072277">
    <property type="term" value="P:metanephric glomerular capillary formation"/>
    <property type="evidence" value="ECO:0000250"/>
    <property type="project" value="UniProtKB"/>
</dbReference>
<dbReference type="GO" id="GO:0072162">
    <property type="term" value="P:metanephric mesenchymal cell differentiation"/>
    <property type="evidence" value="ECO:0000250"/>
    <property type="project" value="UniProtKB"/>
</dbReference>
<dbReference type="GO" id="GO:0001763">
    <property type="term" value="P:morphogenesis of a branching structure"/>
    <property type="evidence" value="ECO:0000250"/>
    <property type="project" value="UniProtKB"/>
</dbReference>
<dbReference type="GO" id="GO:0060766">
    <property type="term" value="P:negative regulation of androgen receptor signaling pathway"/>
    <property type="evidence" value="ECO:0000250"/>
    <property type="project" value="UniProtKB"/>
</dbReference>
<dbReference type="GO" id="GO:0000122">
    <property type="term" value="P:negative regulation of transcription by RNA polymerase II"/>
    <property type="evidence" value="ECO:0000250"/>
    <property type="project" value="UniProtKB"/>
</dbReference>
<dbReference type="GO" id="GO:0045944">
    <property type="term" value="P:positive regulation of transcription by RNA polymerase II"/>
    <property type="evidence" value="ECO:0000250"/>
    <property type="project" value="UniProtKB"/>
</dbReference>
<dbReference type="GO" id="GO:0048608">
    <property type="term" value="P:reproductive structure development"/>
    <property type="evidence" value="ECO:0000250"/>
    <property type="project" value="UniProtKB"/>
</dbReference>
<dbReference type="GO" id="GO:0060541">
    <property type="term" value="P:respiratory system development"/>
    <property type="evidence" value="ECO:0000250"/>
    <property type="project" value="UniProtKB"/>
</dbReference>
<dbReference type="GO" id="GO:0060021">
    <property type="term" value="P:roof of mouth development"/>
    <property type="evidence" value="ECO:0000250"/>
    <property type="project" value="UniProtKB"/>
</dbReference>
<dbReference type="GO" id="GO:0060008">
    <property type="term" value="P:Sertoli cell differentiation"/>
    <property type="evidence" value="ECO:0000250"/>
    <property type="project" value="UniProtKB"/>
</dbReference>
<dbReference type="GO" id="GO:0007530">
    <property type="term" value="P:sex determination"/>
    <property type="evidence" value="ECO:0000250"/>
    <property type="project" value="UniProtKB"/>
</dbReference>
<dbReference type="GO" id="GO:0048536">
    <property type="term" value="P:spleen development"/>
    <property type="evidence" value="ECO:0000250"/>
    <property type="project" value="UniProtKB"/>
</dbReference>
<dbReference type="GO" id="GO:0001657">
    <property type="term" value="P:ureteric bud development"/>
    <property type="evidence" value="ECO:0000250"/>
    <property type="project" value="UniProtKB"/>
</dbReference>
<dbReference type="GO" id="GO:0001944">
    <property type="term" value="P:vasculature development"/>
    <property type="evidence" value="ECO:0000250"/>
    <property type="project" value="UniProtKB"/>
</dbReference>
<dbReference type="CDD" id="cd19704">
    <property type="entry name" value="bHLH_TS_TCF21_capsulin"/>
    <property type="match status" value="1"/>
</dbReference>
<dbReference type="FunFam" id="4.10.280.10:FF:000010">
    <property type="entry name" value="Scleraxis bHLH transcription factor"/>
    <property type="match status" value="1"/>
</dbReference>
<dbReference type="Gene3D" id="4.10.280.10">
    <property type="entry name" value="Helix-loop-helix DNA-binding domain"/>
    <property type="match status" value="1"/>
</dbReference>
<dbReference type="InterPro" id="IPR011598">
    <property type="entry name" value="bHLH_dom"/>
</dbReference>
<dbReference type="InterPro" id="IPR050283">
    <property type="entry name" value="E-box_TF_Regulators"/>
</dbReference>
<dbReference type="InterPro" id="IPR036638">
    <property type="entry name" value="HLH_DNA-bd_sf"/>
</dbReference>
<dbReference type="PANTHER" id="PTHR23349">
    <property type="entry name" value="BASIC HELIX-LOOP-HELIX TRANSCRIPTION FACTOR, TWIST"/>
    <property type="match status" value="1"/>
</dbReference>
<dbReference type="PANTHER" id="PTHR23349:SF67">
    <property type="entry name" value="TRANSCRIPTION FACTOR 21"/>
    <property type="match status" value="1"/>
</dbReference>
<dbReference type="Pfam" id="PF00010">
    <property type="entry name" value="HLH"/>
    <property type="match status" value="1"/>
</dbReference>
<dbReference type="SMART" id="SM00353">
    <property type="entry name" value="HLH"/>
    <property type="match status" value="1"/>
</dbReference>
<dbReference type="SUPFAM" id="SSF47459">
    <property type="entry name" value="HLH, helix-loop-helix DNA-binding domain"/>
    <property type="match status" value="1"/>
</dbReference>
<dbReference type="PROSITE" id="PS50888">
    <property type="entry name" value="BHLH"/>
    <property type="match status" value="1"/>
</dbReference>
<reference evidence="5" key="1">
    <citation type="submission" date="2007-09" db="EMBL/GenBank/DDBJ databases">
        <authorList>
            <consortium name="NIH - Xenopus Gene Collection (XGC) project"/>
        </authorList>
    </citation>
    <scope>NUCLEOTIDE SEQUENCE [LARGE SCALE MRNA]</scope>
    <source>
        <tissue evidence="5">Spleen</tissue>
    </source>
</reference>
<evidence type="ECO:0000250" key="1">
    <source>
        <dbReference type="UniProtKB" id="O43680"/>
    </source>
</evidence>
<evidence type="ECO:0000250" key="2">
    <source>
        <dbReference type="UniProtKB" id="Q6GNB7"/>
    </source>
</evidence>
<evidence type="ECO:0000255" key="3">
    <source>
        <dbReference type="PROSITE-ProRule" id="PRU00981"/>
    </source>
</evidence>
<evidence type="ECO:0000256" key="4">
    <source>
        <dbReference type="SAM" id="MobiDB-lite"/>
    </source>
</evidence>
<evidence type="ECO:0000312" key="5">
    <source>
        <dbReference type="EMBL" id="AAI53712.1"/>
    </source>
</evidence>
<organism>
    <name type="scientific">Xenopus tropicalis</name>
    <name type="common">Western clawed frog</name>
    <name type="synonym">Silurana tropicalis</name>
    <dbReference type="NCBI Taxonomy" id="8364"/>
    <lineage>
        <taxon>Eukaryota</taxon>
        <taxon>Metazoa</taxon>
        <taxon>Chordata</taxon>
        <taxon>Craniata</taxon>
        <taxon>Vertebrata</taxon>
        <taxon>Euteleostomi</taxon>
        <taxon>Amphibia</taxon>
        <taxon>Batrachia</taxon>
        <taxon>Anura</taxon>
        <taxon>Pipoidea</taxon>
        <taxon>Pipidae</taxon>
        <taxon>Xenopodinae</taxon>
        <taxon>Xenopus</taxon>
        <taxon>Silurana</taxon>
    </lineage>
</organism>
<feature type="chain" id="PRO_0000386432" description="Transcription factor 21">
    <location>
        <begin position="1"/>
        <end position="179"/>
    </location>
</feature>
<feature type="domain" description="bHLH" evidence="3">
    <location>
        <begin position="79"/>
        <end position="131"/>
    </location>
</feature>
<feature type="region of interest" description="Disordered" evidence="4">
    <location>
        <begin position="23"/>
        <end position="87"/>
    </location>
</feature>
<feature type="compositionally biased region" description="Polar residues" evidence="4">
    <location>
        <begin position="34"/>
        <end position="46"/>
    </location>
</feature>
<feature type="compositionally biased region" description="Basic residues" evidence="4">
    <location>
        <begin position="50"/>
        <end position="64"/>
    </location>
</feature>
<feature type="compositionally biased region" description="Polar residues" evidence="4">
    <location>
        <begin position="70"/>
        <end position="80"/>
    </location>
</feature>
<accession>A8E5T6</accession>
<name>TCF21_XENTR</name>
<proteinExistence type="evidence at transcript level"/>
<comment type="function">
    <text evidence="1">Involved in epithelial-mesenchymal interactions in kidney and lung morphogenesis that include epithelial differentiation and branching morphogenesis.</text>
</comment>
<comment type="subunit">
    <text evidence="1">Efficient DNA binding requires dimerization with another bHLH protein.</text>
</comment>
<comment type="subcellular location">
    <subcellularLocation>
        <location evidence="1 3">Nucleus</location>
    </subcellularLocation>
</comment>
<keyword id="KW-0221">Differentiation</keyword>
<keyword id="KW-0238">DNA-binding</keyword>
<keyword id="KW-0539">Nucleus</keyword>
<keyword id="KW-1185">Reference proteome</keyword>
<keyword id="KW-0804">Transcription</keyword>
<keyword id="KW-0805">Transcription regulation</keyword>
<sequence>MSTGSLSDVEDFQEVEMLECDGIKLDPNKEFGISNDSNEESSTCDNGSPKKGRGTSGKRRKAPSKKSPLGNINQEGKQVQRNAANARERARMRVLSKAFSRLKTTLPWVPPDTKLSKLDTLRLASSYIAHLRQILANDKYENGYIHPVNLTWPFMVAGKPENDLKEVVSTSRLCGPTAS</sequence>